<organism>
    <name type="scientific">Hydrogenovibrio crunogenus (strain DSM 25203 / XCL-2)</name>
    <name type="common">Thiomicrospira crunogena</name>
    <dbReference type="NCBI Taxonomy" id="317025"/>
    <lineage>
        <taxon>Bacteria</taxon>
        <taxon>Pseudomonadati</taxon>
        <taxon>Pseudomonadota</taxon>
        <taxon>Gammaproteobacteria</taxon>
        <taxon>Thiotrichales</taxon>
        <taxon>Piscirickettsiaceae</taxon>
        <taxon>Hydrogenovibrio</taxon>
    </lineage>
</organism>
<proteinExistence type="inferred from homology"/>
<gene>
    <name evidence="1" type="primary">clpP</name>
    <name type="ordered locus">Tcr_1177</name>
</gene>
<protein>
    <recommendedName>
        <fullName evidence="1">ATP-dependent Clp protease proteolytic subunit</fullName>
        <ecNumber evidence="1">3.4.21.92</ecNumber>
    </recommendedName>
    <alternativeName>
        <fullName evidence="1">Endopeptidase Clp</fullName>
    </alternativeName>
</protein>
<evidence type="ECO:0000255" key="1">
    <source>
        <dbReference type="HAMAP-Rule" id="MF_00444"/>
    </source>
</evidence>
<accession>Q31GF1</accession>
<keyword id="KW-0963">Cytoplasm</keyword>
<keyword id="KW-0378">Hydrolase</keyword>
<keyword id="KW-0645">Protease</keyword>
<keyword id="KW-0720">Serine protease</keyword>
<feature type="chain" id="PRO_0000236417" description="ATP-dependent Clp protease proteolytic subunit">
    <location>
        <begin position="1"/>
        <end position="200"/>
    </location>
</feature>
<feature type="active site" description="Nucleophile" evidence="1">
    <location>
        <position position="105"/>
    </location>
</feature>
<feature type="active site" evidence="1">
    <location>
        <position position="130"/>
    </location>
</feature>
<sequence length="200" mass="22164">MHSTPIQDALVPMVIEQTSRGERSFDIYSRLLKERVIFLVGQVEDHMANLIVAQLLFLESENPDKDIHLYINSPGGSVTAGMAIYDTMRFIKPDVSTMCIGQAASMGSFLLSAGAEGKRYALPNSRVMIHQPLGGFQGQASDIEIHAKEIIQIKQKLNKALADHTGQPIEVIENDTDRDNFMSADEACDYGLVDKVLTRR</sequence>
<reference key="1">
    <citation type="journal article" date="2006" name="PLoS Biol.">
        <title>The genome of deep-sea vent chemolithoautotroph Thiomicrospira crunogena XCL-2.</title>
        <authorList>
            <person name="Scott K.M."/>
            <person name="Sievert S.M."/>
            <person name="Abril F.N."/>
            <person name="Ball L.A."/>
            <person name="Barrett C.J."/>
            <person name="Blake R.A."/>
            <person name="Boller A.J."/>
            <person name="Chain P.S.G."/>
            <person name="Clark J.A."/>
            <person name="Davis C.R."/>
            <person name="Detter C."/>
            <person name="Do K.F."/>
            <person name="Dobrinski K.P."/>
            <person name="Faza B.I."/>
            <person name="Fitzpatrick K.A."/>
            <person name="Freyermuth S.K."/>
            <person name="Harmer T.L."/>
            <person name="Hauser L.J."/>
            <person name="Huegler M."/>
            <person name="Kerfeld C.A."/>
            <person name="Klotz M.G."/>
            <person name="Kong W.W."/>
            <person name="Land M."/>
            <person name="Lapidus A."/>
            <person name="Larimer F.W."/>
            <person name="Longo D.L."/>
            <person name="Lucas S."/>
            <person name="Malfatti S.A."/>
            <person name="Massey S.E."/>
            <person name="Martin D.D."/>
            <person name="McCuddin Z."/>
            <person name="Meyer F."/>
            <person name="Moore J.L."/>
            <person name="Ocampo L.H. Jr."/>
            <person name="Paul J.H."/>
            <person name="Paulsen I.T."/>
            <person name="Reep D.K."/>
            <person name="Ren Q."/>
            <person name="Ross R.L."/>
            <person name="Sato P.Y."/>
            <person name="Thomas P."/>
            <person name="Tinkham L.E."/>
            <person name="Zeruth G.T."/>
        </authorList>
    </citation>
    <scope>NUCLEOTIDE SEQUENCE [LARGE SCALE GENOMIC DNA]</scope>
    <source>
        <strain>DSM 25203 / XCL-2</strain>
    </source>
</reference>
<name>CLPP_HYDCU</name>
<comment type="function">
    <text evidence="1">Cleaves peptides in various proteins in a process that requires ATP hydrolysis. Has a chymotrypsin-like activity. Plays a major role in the degradation of misfolded proteins.</text>
</comment>
<comment type="catalytic activity">
    <reaction evidence="1">
        <text>Hydrolysis of proteins to small peptides in the presence of ATP and magnesium. alpha-casein is the usual test substrate. In the absence of ATP, only oligopeptides shorter than five residues are hydrolyzed (such as succinyl-Leu-Tyr-|-NHMec, and Leu-Tyr-Leu-|-Tyr-Trp, in which cleavage of the -Tyr-|-Leu- and -Tyr-|-Trp bonds also occurs).</text>
        <dbReference type="EC" id="3.4.21.92"/>
    </reaction>
</comment>
<comment type="subunit">
    <text evidence="1">Fourteen ClpP subunits assemble into 2 heptameric rings which stack back to back to give a disk-like structure with a central cavity, resembling the structure of eukaryotic proteasomes.</text>
</comment>
<comment type="subcellular location">
    <subcellularLocation>
        <location evidence="1">Cytoplasm</location>
    </subcellularLocation>
</comment>
<comment type="similarity">
    <text evidence="1">Belongs to the peptidase S14 family.</text>
</comment>
<dbReference type="EC" id="3.4.21.92" evidence="1"/>
<dbReference type="EMBL" id="CP000109">
    <property type="protein sequence ID" value="ABB41772.1"/>
    <property type="molecule type" value="Genomic_DNA"/>
</dbReference>
<dbReference type="SMR" id="Q31GF1"/>
<dbReference type="STRING" id="317025.Tcr_1177"/>
<dbReference type="MEROPS" id="S14.001"/>
<dbReference type="KEGG" id="tcx:Tcr_1177"/>
<dbReference type="eggNOG" id="COG0740">
    <property type="taxonomic scope" value="Bacteria"/>
</dbReference>
<dbReference type="HOGENOM" id="CLU_058707_3_2_6"/>
<dbReference type="OrthoDB" id="9802800at2"/>
<dbReference type="GO" id="GO:0005737">
    <property type="term" value="C:cytoplasm"/>
    <property type="evidence" value="ECO:0007669"/>
    <property type="project" value="UniProtKB-SubCell"/>
</dbReference>
<dbReference type="GO" id="GO:0009368">
    <property type="term" value="C:endopeptidase Clp complex"/>
    <property type="evidence" value="ECO:0007669"/>
    <property type="project" value="TreeGrafter"/>
</dbReference>
<dbReference type="GO" id="GO:0004176">
    <property type="term" value="F:ATP-dependent peptidase activity"/>
    <property type="evidence" value="ECO:0007669"/>
    <property type="project" value="InterPro"/>
</dbReference>
<dbReference type="GO" id="GO:0051117">
    <property type="term" value="F:ATPase binding"/>
    <property type="evidence" value="ECO:0007669"/>
    <property type="project" value="TreeGrafter"/>
</dbReference>
<dbReference type="GO" id="GO:0004252">
    <property type="term" value="F:serine-type endopeptidase activity"/>
    <property type="evidence" value="ECO:0007669"/>
    <property type="project" value="UniProtKB-UniRule"/>
</dbReference>
<dbReference type="GO" id="GO:0006515">
    <property type="term" value="P:protein quality control for misfolded or incompletely synthesized proteins"/>
    <property type="evidence" value="ECO:0007669"/>
    <property type="project" value="TreeGrafter"/>
</dbReference>
<dbReference type="CDD" id="cd07017">
    <property type="entry name" value="S14_ClpP_2"/>
    <property type="match status" value="1"/>
</dbReference>
<dbReference type="FunFam" id="3.90.226.10:FF:000001">
    <property type="entry name" value="ATP-dependent Clp protease proteolytic subunit"/>
    <property type="match status" value="1"/>
</dbReference>
<dbReference type="Gene3D" id="3.90.226.10">
    <property type="entry name" value="2-enoyl-CoA Hydratase, Chain A, domain 1"/>
    <property type="match status" value="1"/>
</dbReference>
<dbReference type="HAMAP" id="MF_00444">
    <property type="entry name" value="ClpP"/>
    <property type="match status" value="1"/>
</dbReference>
<dbReference type="InterPro" id="IPR001907">
    <property type="entry name" value="ClpP"/>
</dbReference>
<dbReference type="InterPro" id="IPR029045">
    <property type="entry name" value="ClpP/crotonase-like_dom_sf"/>
</dbReference>
<dbReference type="InterPro" id="IPR023562">
    <property type="entry name" value="ClpP/TepA"/>
</dbReference>
<dbReference type="InterPro" id="IPR033135">
    <property type="entry name" value="ClpP_His_AS"/>
</dbReference>
<dbReference type="InterPro" id="IPR018215">
    <property type="entry name" value="ClpP_Ser_AS"/>
</dbReference>
<dbReference type="NCBIfam" id="TIGR00493">
    <property type="entry name" value="clpP"/>
    <property type="match status" value="1"/>
</dbReference>
<dbReference type="NCBIfam" id="NF001368">
    <property type="entry name" value="PRK00277.1"/>
    <property type="match status" value="1"/>
</dbReference>
<dbReference type="NCBIfam" id="NF009205">
    <property type="entry name" value="PRK12553.1"/>
    <property type="match status" value="1"/>
</dbReference>
<dbReference type="PANTHER" id="PTHR10381">
    <property type="entry name" value="ATP-DEPENDENT CLP PROTEASE PROTEOLYTIC SUBUNIT"/>
    <property type="match status" value="1"/>
</dbReference>
<dbReference type="PANTHER" id="PTHR10381:SF70">
    <property type="entry name" value="ATP-DEPENDENT CLP PROTEASE PROTEOLYTIC SUBUNIT"/>
    <property type="match status" value="1"/>
</dbReference>
<dbReference type="Pfam" id="PF00574">
    <property type="entry name" value="CLP_protease"/>
    <property type="match status" value="1"/>
</dbReference>
<dbReference type="PRINTS" id="PR00127">
    <property type="entry name" value="CLPPROTEASEP"/>
</dbReference>
<dbReference type="SUPFAM" id="SSF52096">
    <property type="entry name" value="ClpP/crotonase"/>
    <property type="match status" value="1"/>
</dbReference>
<dbReference type="PROSITE" id="PS00382">
    <property type="entry name" value="CLP_PROTEASE_HIS"/>
    <property type="match status" value="1"/>
</dbReference>
<dbReference type="PROSITE" id="PS00381">
    <property type="entry name" value="CLP_PROTEASE_SER"/>
    <property type="match status" value="1"/>
</dbReference>